<organism>
    <name type="scientific">Dendroaspis polylepis polylepis</name>
    <name type="common">Black mamba</name>
    <dbReference type="NCBI Taxonomy" id="8620"/>
    <lineage>
        <taxon>Eukaryota</taxon>
        <taxon>Metazoa</taxon>
        <taxon>Chordata</taxon>
        <taxon>Craniata</taxon>
        <taxon>Vertebrata</taxon>
        <taxon>Euteleostomi</taxon>
        <taxon>Lepidosauria</taxon>
        <taxon>Squamata</taxon>
        <taxon>Bifurcata</taxon>
        <taxon>Unidentata</taxon>
        <taxon>Episquamata</taxon>
        <taxon>Toxicofera</taxon>
        <taxon>Serpentes</taxon>
        <taxon>Colubroidea</taxon>
        <taxon>Elapidae</taxon>
        <taxon>Elapinae</taxon>
        <taxon>Dendroaspis</taxon>
    </lineage>
</organism>
<evidence type="ECO:0000255" key="1">
    <source>
        <dbReference type="PROSITE-ProRule" id="PRU00031"/>
    </source>
</evidence>
<evidence type="ECO:0000269" key="2">
    <source>
    </source>
</evidence>
<evidence type="ECO:0000305" key="3"/>
<evidence type="ECO:0007829" key="4">
    <source>
        <dbReference type="PDB" id="1DEM"/>
    </source>
</evidence>
<feature type="chain" id="PRO_0000155434" description="Kunitz-type serine protease inhibitor homolog dendrotoxin I">
    <location>
        <begin position="1"/>
        <end position="60"/>
    </location>
</feature>
<feature type="domain" description="BPTI/Kunitz inhibitor" evidence="1">
    <location>
        <begin position="7"/>
        <end position="57"/>
    </location>
</feature>
<feature type="site" description="May be the major determinant of the binding affinity for potassium channels">
    <location>
        <position position="5"/>
    </location>
</feature>
<feature type="site" description="Important for binding to potassium channels">
    <location>
        <position position="9"/>
    </location>
</feature>
<feature type="site" description="Not important for inhibition of potassium channels">
    <location>
        <position position="19"/>
    </location>
</feature>
<feature type="disulfide bond">
    <location>
        <begin position="7"/>
        <end position="57"/>
    </location>
</feature>
<feature type="disulfide bond">
    <location>
        <begin position="16"/>
        <end position="40"/>
    </location>
</feature>
<feature type="disulfide bond">
    <location>
        <begin position="32"/>
        <end position="53"/>
    </location>
</feature>
<feature type="helix" evidence="4">
    <location>
        <begin position="5"/>
        <end position="7"/>
    </location>
</feature>
<feature type="strand" evidence="4">
    <location>
        <begin position="20"/>
        <end position="25"/>
    </location>
</feature>
<feature type="strand" evidence="4">
    <location>
        <begin position="29"/>
        <end position="37"/>
    </location>
</feature>
<feature type="strand" evidence="4">
    <location>
        <begin position="47"/>
        <end position="49"/>
    </location>
</feature>
<feature type="helix" evidence="4">
    <location>
        <begin position="50"/>
        <end position="57"/>
    </location>
</feature>
<dbReference type="PIR" id="A01211">
    <property type="entry name" value="TIEPVI"/>
</dbReference>
<dbReference type="PDB" id="1DEM">
    <property type="method" value="NMR"/>
    <property type="chains" value="A=1-60"/>
</dbReference>
<dbReference type="PDB" id="1DEN">
    <property type="method" value="NMR"/>
    <property type="chains" value="A=1-60"/>
</dbReference>
<dbReference type="PDBsum" id="1DEM"/>
<dbReference type="PDBsum" id="1DEN"/>
<dbReference type="SMR" id="P00979"/>
<dbReference type="EvolutionaryTrace" id="P00979"/>
<dbReference type="GO" id="GO:0005615">
    <property type="term" value="C:extracellular space"/>
    <property type="evidence" value="ECO:0007669"/>
    <property type="project" value="TreeGrafter"/>
</dbReference>
<dbReference type="GO" id="GO:0015459">
    <property type="term" value="F:potassium channel regulator activity"/>
    <property type="evidence" value="ECO:0007669"/>
    <property type="project" value="UniProtKB-KW"/>
</dbReference>
<dbReference type="GO" id="GO:0004867">
    <property type="term" value="F:serine-type endopeptidase inhibitor activity"/>
    <property type="evidence" value="ECO:0007669"/>
    <property type="project" value="InterPro"/>
</dbReference>
<dbReference type="GO" id="GO:0090729">
    <property type="term" value="F:toxin activity"/>
    <property type="evidence" value="ECO:0007669"/>
    <property type="project" value="UniProtKB-KW"/>
</dbReference>
<dbReference type="CDD" id="cd22595">
    <property type="entry name" value="Kunitz_dendrotoxin"/>
    <property type="match status" value="1"/>
</dbReference>
<dbReference type="Gene3D" id="4.10.410.10">
    <property type="entry name" value="Pancreatic trypsin inhibitor Kunitz domain"/>
    <property type="match status" value="1"/>
</dbReference>
<dbReference type="InterPro" id="IPR002223">
    <property type="entry name" value="Kunitz_BPTI"/>
</dbReference>
<dbReference type="InterPro" id="IPR036880">
    <property type="entry name" value="Kunitz_BPTI_sf"/>
</dbReference>
<dbReference type="InterPro" id="IPR020901">
    <property type="entry name" value="Prtase_inh_Kunz-CS"/>
</dbReference>
<dbReference type="InterPro" id="IPR050098">
    <property type="entry name" value="TFPI/VKTCI-like"/>
</dbReference>
<dbReference type="PANTHER" id="PTHR10083:SF374">
    <property type="entry name" value="BPTI_KUNITZ INHIBITOR DOMAIN-CONTAINING PROTEIN"/>
    <property type="match status" value="1"/>
</dbReference>
<dbReference type="PANTHER" id="PTHR10083">
    <property type="entry name" value="KUNITZ-TYPE PROTEASE INHIBITOR-RELATED"/>
    <property type="match status" value="1"/>
</dbReference>
<dbReference type="Pfam" id="PF00014">
    <property type="entry name" value="Kunitz_BPTI"/>
    <property type="match status" value="1"/>
</dbReference>
<dbReference type="PRINTS" id="PR00759">
    <property type="entry name" value="BASICPTASE"/>
</dbReference>
<dbReference type="SMART" id="SM00131">
    <property type="entry name" value="KU"/>
    <property type="match status" value="1"/>
</dbReference>
<dbReference type="SUPFAM" id="SSF57362">
    <property type="entry name" value="BPTI-like"/>
    <property type="match status" value="1"/>
</dbReference>
<dbReference type="PROSITE" id="PS00280">
    <property type="entry name" value="BPTI_KUNITZ_1"/>
    <property type="match status" value="1"/>
</dbReference>
<dbReference type="PROSITE" id="PS50279">
    <property type="entry name" value="BPTI_KUNITZ_2"/>
    <property type="match status" value="1"/>
</dbReference>
<accession>P00979</accession>
<keyword id="KW-0002">3D-structure</keyword>
<keyword id="KW-0903">Direct protein sequencing</keyword>
<keyword id="KW-1015">Disulfide bond</keyword>
<keyword id="KW-0872">Ion channel impairing toxin</keyword>
<keyword id="KW-0528">Neurotoxin</keyword>
<keyword id="KW-0632">Potassium channel impairing toxin</keyword>
<keyword id="KW-0964">Secreted</keyword>
<keyword id="KW-0800">Toxin</keyword>
<keyword id="KW-1220">Voltage-gated potassium channel impairing toxin</keyword>
<reference key="1">
    <citation type="journal article" date="1973" name="Nature New Biol.">
        <title>Protease inhibitors as snake venom toxins.</title>
        <authorList>
            <person name="Strydom D.J."/>
        </authorList>
    </citation>
    <scope>PROTEIN SEQUENCE</scope>
    <source>
        <tissue>Venom</tissue>
    </source>
</reference>
<reference key="2">
    <citation type="journal article" date="2001" name="Toxicon">
        <title>Twenty years of dendrotoxins.</title>
        <authorList>
            <person name="Harvey A.L."/>
        </authorList>
    </citation>
    <scope>REVIEW</scope>
</reference>
<reference key="3">
    <citation type="journal article" date="2013" name="Mar. Drugs">
        <title>Protease inhibitors from marine venomous animals and their counterparts in terrestrial venomous animals.</title>
        <authorList>
            <person name="Mourao C.B."/>
            <person name="Schwartz E.F."/>
        </authorList>
    </citation>
    <scope>REVIEW</scope>
    <scope>SITE LYS-5; LEU-9 AND LYS-19</scope>
</reference>
<reference key="4">
    <citation type="journal article" date="1996" name="FEBS Lett.">
        <title>Novel effects of dendrotoxin homologues on subtypes of mammalian Kv1 potassium channels expressed in Xenopus oocytes.</title>
        <authorList>
            <person name="Robertson B."/>
            <person name="Owen D."/>
            <person name="Stow J."/>
            <person name="Butler C."/>
            <person name="Newland C."/>
        </authorList>
    </citation>
    <scope>FUNCTION</scope>
</reference>
<reference key="5">
    <citation type="journal article" date="1993" name="Eur. J. Biochem.">
        <title>Sequence-specific 1H-NMR assignment and secondary structure of black mamba dendrotoxin I, a highly selective blocker of voltage-gated potassium channels.</title>
        <authorList>
            <person name="Foray M.-F."/>
            <person name="Lancelin J.-M."/>
            <person name="Hollecker M."/>
            <person name="Marion D."/>
        </authorList>
    </citation>
    <scope>STRUCTURE BY NMR</scope>
</reference>
<reference key="6">
    <citation type="journal article" date="1994" name="Nat. Struct. Biol.">
        <title>Proteinase inhibitor homologues as potassium channel blockers.</title>
        <authorList>
            <person name="Lancelin J.-M."/>
            <person name="Foray M.-F."/>
            <person name="Poncin M.-F."/>
            <person name="Hollecker M."/>
            <person name="Marion D."/>
        </authorList>
    </citation>
    <scope>STRUCTURE BY NMR</scope>
</reference>
<comment type="function">
    <text evidence="2">Serine protease inhibitor homolog that blocks voltage-gated potassium channels (Kv1.1/KCNA1, Kv1.2/KCNA2, and Kv1.6/KCNA6) (IC(50)=0.13-50 nM).</text>
</comment>
<comment type="subcellular location">
    <subcellularLocation>
        <location>Secreted</location>
    </subcellularLocation>
</comment>
<comment type="tissue specificity">
    <text>Expressed by the venom gland.</text>
</comment>
<comment type="toxic dose">
    <text>LD(50) is 38 mg/kg by intravenous injection.</text>
</comment>
<comment type="miscellaneous">
    <text>Negative results: does not inhibit serine proteases.</text>
</comment>
<comment type="similarity">
    <text evidence="3">Belongs to the venom Kunitz-type family.</text>
</comment>
<proteinExistence type="evidence at protein level"/>
<name>VKTH1_DENPO</name>
<protein>
    <recommendedName>
        <fullName>Kunitz-type serine protease inhibitor homolog dendrotoxin I</fullName>
        <shortName>DTX-I</shortName>
    </recommendedName>
    <alternativeName>
        <fullName>Dendrotoxin-1</fullName>
    </alternativeName>
    <alternativeName>
        <fullName>Venom basic protease inhibitor 1</fullName>
    </alternativeName>
</protein>
<sequence length="60" mass="7155">QPLRKLCILHRNPGRCYQKIPAFYYNQKKKQCEGFTWSGCGGNSNRFKTIEECRRTCIRK</sequence>